<reference key="1">
    <citation type="journal article" date="2005" name="J. Bacteriol.">
        <title>Whole-genome sequencing of Staphylococcus haemolyticus uncovers the extreme plasticity of its genome and the evolution of human-colonizing staphylococcal species.</title>
        <authorList>
            <person name="Takeuchi F."/>
            <person name="Watanabe S."/>
            <person name="Baba T."/>
            <person name="Yuzawa H."/>
            <person name="Ito T."/>
            <person name="Morimoto Y."/>
            <person name="Kuroda M."/>
            <person name="Cui L."/>
            <person name="Takahashi M."/>
            <person name="Ankai A."/>
            <person name="Baba S."/>
            <person name="Fukui S."/>
            <person name="Lee J.C."/>
            <person name="Hiramatsu K."/>
        </authorList>
    </citation>
    <scope>NUCLEOTIDE SEQUENCE [LARGE SCALE GENOMIC DNA]</scope>
    <source>
        <strain>JCSC1435</strain>
    </source>
</reference>
<dbReference type="EC" id="6.3.2.8" evidence="1"/>
<dbReference type="EMBL" id="AP006716">
    <property type="protein sequence ID" value="BAE04491.1"/>
    <property type="molecule type" value="Genomic_DNA"/>
</dbReference>
<dbReference type="RefSeq" id="WP_011275483.1">
    <property type="nucleotide sequence ID" value="NC_007168.1"/>
</dbReference>
<dbReference type="SMR" id="Q4L784"/>
<dbReference type="GeneID" id="93780593"/>
<dbReference type="KEGG" id="sha:SH1182"/>
<dbReference type="eggNOG" id="COG0773">
    <property type="taxonomic scope" value="Bacteria"/>
</dbReference>
<dbReference type="HOGENOM" id="CLU_028104_1_0_9"/>
<dbReference type="OrthoDB" id="9804126at2"/>
<dbReference type="UniPathway" id="UPA00219"/>
<dbReference type="Proteomes" id="UP000000543">
    <property type="component" value="Chromosome"/>
</dbReference>
<dbReference type="GO" id="GO:0005737">
    <property type="term" value="C:cytoplasm"/>
    <property type="evidence" value="ECO:0007669"/>
    <property type="project" value="UniProtKB-SubCell"/>
</dbReference>
<dbReference type="GO" id="GO:0005524">
    <property type="term" value="F:ATP binding"/>
    <property type="evidence" value="ECO:0007669"/>
    <property type="project" value="UniProtKB-UniRule"/>
</dbReference>
<dbReference type="GO" id="GO:0008763">
    <property type="term" value="F:UDP-N-acetylmuramate-L-alanine ligase activity"/>
    <property type="evidence" value="ECO:0007669"/>
    <property type="project" value="UniProtKB-UniRule"/>
</dbReference>
<dbReference type="GO" id="GO:0051301">
    <property type="term" value="P:cell division"/>
    <property type="evidence" value="ECO:0007669"/>
    <property type="project" value="UniProtKB-KW"/>
</dbReference>
<dbReference type="GO" id="GO:0071555">
    <property type="term" value="P:cell wall organization"/>
    <property type="evidence" value="ECO:0007669"/>
    <property type="project" value="UniProtKB-KW"/>
</dbReference>
<dbReference type="GO" id="GO:0009252">
    <property type="term" value="P:peptidoglycan biosynthetic process"/>
    <property type="evidence" value="ECO:0007669"/>
    <property type="project" value="UniProtKB-UniRule"/>
</dbReference>
<dbReference type="GO" id="GO:0008360">
    <property type="term" value="P:regulation of cell shape"/>
    <property type="evidence" value="ECO:0007669"/>
    <property type="project" value="UniProtKB-KW"/>
</dbReference>
<dbReference type="Gene3D" id="3.90.190.20">
    <property type="entry name" value="Mur ligase, C-terminal domain"/>
    <property type="match status" value="1"/>
</dbReference>
<dbReference type="Gene3D" id="3.40.1190.10">
    <property type="entry name" value="Mur-like, catalytic domain"/>
    <property type="match status" value="1"/>
</dbReference>
<dbReference type="Gene3D" id="3.40.50.720">
    <property type="entry name" value="NAD(P)-binding Rossmann-like Domain"/>
    <property type="match status" value="1"/>
</dbReference>
<dbReference type="HAMAP" id="MF_00046">
    <property type="entry name" value="MurC"/>
    <property type="match status" value="1"/>
</dbReference>
<dbReference type="InterPro" id="IPR036565">
    <property type="entry name" value="Mur-like_cat_sf"/>
</dbReference>
<dbReference type="InterPro" id="IPR004101">
    <property type="entry name" value="Mur_ligase_C"/>
</dbReference>
<dbReference type="InterPro" id="IPR036615">
    <property type="entry name" value="Mur_ligase_C_dom_sf"/>
</dbReference>
<dbReference type="InterPro" id="IPR013221">
    <property type="entry name" value="Mur_ligase_cen"/>
</dbReference>
<dbReference type="InterPro" id="IPR000713">
    <property type="entry name" value="Mur_ligase_N"/>
</dbReference>
<dbReference type="InterPro" id="IPR050061">
    <property type="entry name" value="MurCDEF_pg_biosynth"/>
</dbReference>
<dbReference type="InterPro" id="IPR005758">
    <property type="entry name" value="UDP-N-AcMur_Ala_ligase_MurC"/>
</dbReference>
<dbReference type="NCBIfam" id="TIGR01082">
    <property type="entry name" value="murC"/>
    <property type="match status" value="1"/>
</dbReference>
<dbReference type="PANTHER" id="PTHR43445:SF3">
    <property type="entry name" value="UDP-N-ACETYLMURAMATE--L-ALANINE LIGASE"/>
    <property type="match status" value="1"/>
</dbReference>
<dbReference type="PANTHER" id="PTHR43445">
    <property type="entry name" value="UDP-N-ACETYLMURAMATE--L-ALANINE LIGASE-RELATED"/>
    <property type="match status" value="1"/>
</dbReference>
<dbReference type="Pfam" id="PF01225">
    <property type="entry name" value="Mur_ligase"/>
    <property type="match status" value="1"/>
</dbReference>
<dbReference type="Pfam" id="PF02875">
    <property type="entry name" value="Mur_ligase_C"/>
    <property type="match status" value="1"/>
</dbReference>
<dbReference type="Pfam" id="PF08245">
    <property type="entry name" value="Mur_ligase_M"/>
    <property type="match status" value="1"/>
</dbReference>
<dbReference type="SUPFAM" id="SSF51984">
    <property type="entry name" value="MurCD N-terminal domain"/>
    <property type="match status" value="1"/>
</dbReference>
<dbReference type="SUPFAM" id="SSF53623">
    <property type="entry name" value="MurD-like peptide ligases, catalytic domain"/>
    <property type="match status" value="1"/>
</dbReference>
<dbReference type="SUPFAM" id="SSF53244">
    <property type="entry name" value="MurD-like peptide ligases, peptide-binding domain"/>
    <property type="match status" value="1"/>
</dbReference>
<evidence type="ECO:0000255" key="1">
    <source>
        <dbReference type="HAMAP-Rule" id="MF_00046"/>
    </source>
</evidence>
<accession>Q4L784</accession>
<comment type="function">
    <text evidence="1">Cell wall formation.</text>
</comment>
<comment type="catalytic activity">
    <reaction evidence="1">
        <text>UDP-N-acetyl-alpha-D-muramate + L-alanine + ATP = UDP-N-acetyl-alpha-D-muramoyl-L-alanine + ADP + phosphate + H(+)</text>
        <dbReference type="Rhea" id="RHEA:23372"/>
        <dbReference type="ChEBI" id="CHEBI:15378"/>
        <dbReference type="ChEBI" id="CHEBI:30616"/>
        <dbReference type="ChEBI" id="CHEBI:43474"/>
        <dbReference type="ChEBI" id="CHEBI:57972"/>
        <dbReference type="ChEBI" id="CHEBI:70757"/>
        <dbReference type="ChEBI" id="CHEBI:83898"/>
        <dbReference type="ChEBI" id="CHEBI:456216"/>
        <dbReference type="EC" id="6.3.2.8"/>
    </reaction>
</comment>
<comment type="pathway">
    <text evidence="1">Cell wall biogenesis; peptidoglycan biosynthesis.</text>
</comment>
<comment type="subcellular location">
    <subcellularLocation>
        <location evidence="1">Cytoplasm</location>
    </subcellularLocation>
</comment>
<comment type="similarity">
    <text evidence="1">Belongs to the MurCDEF family.</text>
</comment>
<name>MURC_STAHJ</name>
<organism>
    <name type="scientific">Staphylococcus haemolyticus (strain JCSC1435)</name>
    <dbReference type="NCBI Taxonomy" id="279808"/>
    <lineage>
        <taxon>Bacteria</taxon>
        <taxon>Bacillati</taxon>
        <taxon>Bacillota</taxon>
        <taxon>Bacilli</taxon>
        <taxon>Bacillales</taxon>
        <taxon>Staphylococcaceae</taxon>
        <taxon>Staphylococcus</taxon>
    </lineage>
</organism>
<keyword id="KW-0067">ATP-binding</keyword>
<keyword id="KW-0131">Cell cycle</keyword>
<keyword id="KW-0132">Cell division</keyword>
<keyword id="KW-0133">Cell shape</keyword>
<keyword id="KW-0961">Cell wall biogenesis/degradation</keyword>
<keyword id="KW-0963">Cytoplasm</keyword>
<keyword id="KW-0436">Ligase</keyword>
<keyword id="KW-0547">Nucleotide-binding</keyword>
<keyword id="KW-0573">Peptidoglycan synthesis</keyword>
<protein>
    <recommendedName>
        <fullName evidence="1">UDP-N-acetylmuramate--L-alanine ligase</fullName>
        <ecNumber evidence="1">6.3.2.8</ecNumber>
    </recommendedName>
    <alternativeName>
        <fullName evidence="1">UDP-N-acetylmuramoyl-L-alanine synthetase</fullName>
    </alternativeName>
</protein>
<feature type="chain" id="PRO_0000242599" description="UDP-N-acetylmuramate--L-alanine ligase">
    <location>
        <begin position="1"/>
        <end position="437"/>
    </location>
</feature>
<feature type="binding site" evidence="1">
    <location>
        <begin position="108"/>
        <end position="114"/>
    </location>
    <ligand>
        <name>ATP</name>
        <dbReference type="ChEBI" id="CHEBI:30616"/>
    </ligand>
</feature>
<proteinExistence type="inferred from homology"/>
<gene>
    <name evidence="1" type="primary">murC</name>
    <name type="ordered locus">SH1182</name>
</gene>
<sequence>MTHYHFVGIKGAGMSSLAQIMHDLGHEVQGSDIEKYVFTEVALKNKGIKILPFNADNIKEGMVVIQGNAFPDTHEEIVKAHDLKLDVIRYHDFLGHVIDQYTSVAVTGAHGKTSTTGLLSHVMNGDKKTSFLIGDGTGMGLPASDYFAFEACEYRRHFLSYHPDYAIMTNIDFDHPDYFKDIDDVASAFQSMAHNVKKAIIAWGDDDHLRQLKADVPIYYYGLNKNDDIYADNIQITDKGTQFDVYVNGEYYDQFLSPQYGDHNIQNALAVIAISYLEKMDVNNIKEALETFGGVKRRFNETNVANQVLVDDYAHHPREISATIETARKKYPNKDIVAVFQPHTFSRTQAFLDEFATSLSKADHVYLCEIFGSIRENTGDLTIQDLINRIDGSALIEENNIDVLDQFDNAVILFMGAGDIQKLQRAYEEHVGMTNEF</sequence>